<feature type="chain" id="PRO_0000058257" description="Pericentrin">
    <location>
        <begin position="1"/>
        <end position="3336"/>
    </location>
</feature>
<feature type="region of interest" description="Disordered" evidence="3">
    <location>
        <begin position="1"/>
        <end position="71"/>
    </location>
</feature>
<feature type="region of interest" description="Disordered" evidence="3">
    <location>
        <begin position="81"/>
        <end position="100"/>
    </location>
</feature>
<feature type="region of interest" description="Disordered" evidence="3">
    <location>
        <begin position="569"/>
        <end position="589"/>
    </location>
</feature>
<feature type="region of interest" description="Disordered" evidence="3">
    <location>
        <begin position="1619"/>
        <end position="1638"/>
    </location>
</feature>
<feature type="region of interest" description="Disordered" evidence="3">
    <location>
        <begin position="1954"/>
        <end position="1974"/>
    </location>
</feature>
<feature type="region of interest" description="Disordered" evidence="3">
    <location>
        <begin position="2168"/>
        <end position="2214"/>
    </location>
</feature>
<feature type="region of interest" description="Disordered" evidence="3">
    <location>
        <begin position="2318"/>
        <end position="2374"/>
    </location>
</feature>
<feature type="region of interest" description="Disordered" evidence="3">
    <location>
        <begin position="2875"/>
        <end position="2910"/>
    </location>
</feature>
<feature type="region of interest" description="Interaction with NEK2" evidence="12">
    <location>
        <begin position="2983"/>
        <end position="3246"/>
    </location>
</feature>
<feature type="region of interest" description="Disordered" evidence="3">
    <location>
        <begin position="3084"/>
        <end position="3126"/>
    </location>
</feature>
<feature type="region of interest" description="Calmodulin-binding">
    <location>
        <begin position="3195"/>
        <end position="3208"/>
    </location>
</feature>
<feature type="region of interest" description="Disordered" evidence="3">
    <location>
        <begin position="3224"/>
        <end position="3300"/>
    </location>
</feature>
<feature type="coiled-coil region" evidence="2">
    <location>
        <begin position="258"/>
        <end position="553"/>
    </location>
</feature>
<feature type="coiled-coil region" evidence="2">
    <location>
        <begin position="675"/>
        <end position="835"/>
    </location>
</feature>
<feature type="coiled-coil region" evidence="2">
    <location>
        <begin position="1010"/>
        <end position="1146"/>
    </location>
</feature>
<feature type="coiled-coil region" evidence="2">
    <location>
        <begin position="1299"/>
        <end position="1949"/>
    </location>
</feature>
<feature type="coiled-coil region" evidence="2">
    <location>
        <begin position="2064"/>
        <end position="2082"/>
    </location>
</feature>
<feature type="coiled-coil region" evidence="2">
    <location>
        <begin position="2536"/>
        <end position="3086"/>
    </location>
</feature>
<feature type="compositionally biased region" description="Basic and acidic residues" evidence="3">
    <location>
        <begin position="27"/>
        <end position="37"/>
    </location>
</feature>
<feature type="compositionally biased region" description="Pro residues" evidence="3">
    <location>
        <begin position="1626"/>
        <end position="1636"/>
    </location>
</feature>
<feature type="compositionally biased region" description="Polar residues" evidence="3">
    <location>
        <begin position="2186"/>
        <end position="2197"/>
    </location>
</feature>
<feature type="compositionally biased region" description="Basic and acidic residues" evidence="3">
    <location>
        <begin position="2334"/>
        <end position="2343"/>
    </location>
</feature>
<feature type="compositionally biased region" description="Basic and acidic residues" evidence="3">
    <location>
        <begin position="2876"/>
        <end position="2896"/>
    </location>
</feature>
<feature type="compositionally biased region" description="Basic and acidic residues" evidence="3">
    <location>
        <begin position="3092"/>
        <end position="3102"/>
    </location>
</feature>
<feature type="compositionally biased region" description="Low complexity" evidence="3">
    <location>
        <begin position="3226"/>
        <end position="3240"/>
    </location>
</feature>
<feature type="compositionally biased region" description="Polar residues" evidence="3">
    <location>
        <begin position="3283"/>
        <end position="3297"/>
    </location>
</feature>
<feature type="modified residue" description="Phosphoserine" evidence="27">
    <location>
        <position position="44"/>
    </location>
</feature>
<feature type="modified residue" description="Phosphoserine" evidence="27">
    <location>
        <position position="188"/>
    </location>
</feature>
<feature type="modified residue" description="Phosphothreonine" evidence="26 27">
    <location>
        <position position="191"/>
    </location>
</feature>
<feature type="modified residue" description="Phosphoserine" evidence="28">
    <location>
        <position position="610"/>
    </location>
</feature>
<feature type="modified residue" description="Phosphoserine" evidence="26">
    <location>
        <position position="682"/>
    </location>
</feature>
<feature type="modified residue" description="Phosphoserine" evidence="27">
    <location>
        <position position="1245"/>
    </location>
</feature>
<feature type="modified residue" description="Phosphoserine" evidence="27">
    <location>
        <position position="1653"/>
    </location>
</feature>
<feature type="modified residue" description="Phosphoserine" evidence="1">
    <location>
        <position position="1712"/>
    </location>
</feature>
<feature type="modified residue" description="Phosphoserine" evidence="26">
    <location>
        <position position="2044"/>
    </location>
</feature>
<feature type="modified residue" description="Phosphoserine" evidence="25">
    <location>
        <position position="2177"/>
    </location>
</feature>
<feature type="modified residue" description="Phosphoserine" evidence="27">
    <location>
        <position position="2192"/>
    </location>
</feature>
<feature type="modified residue" description="Phosphoserine" evidence="1">
    <location>
        <position position="2225"/>
    </location>
</feature>
<feature type="modified residue" description="Phosphoserine" evidence="1">
    <location>
        <position position="2226"/>
    </location>
</feature>
<feature type="modified residue" description="Phosphoserine" evidence="25">
    <location>
        <position position="2327"/>
    </location>
</feature>
<feature type="modified residue" description="Phosphoserine" evidence="27">
    <location>
        <position position="2352"/>
    </location>
</feature>
<feature type="modified residue" description="Phosphoserine" evidence="27">
    <location>
        <position position="2355"/>
    </location>
</feature>
<feature type="modified residue" description="Phosphoserine" evidence="26 27">
    <location>
        <position position="2477"/>
    </location>
</feature>
<feature type="modified residue" description="Phosphoserine" evidence="26">
    <location>
        <position position="2486"/>
    </location>
</feature>
<feature type="modified residue" description="Phosphoserine" evidence="26">
    <location>
        <position position="3302"/>
    </location>
</feature>
<feature type="splice variant" id="VSP_040104" description="In isoform 2." evidence="23">
    <location>
        <begin position="1"/>
        <end position="118"/>
    </location>
</feature>
<feature type="splice variant" id="VSP_040105" description="In isoform 2." evidence="23">
    <location>
        <begin position="2839"/>
        <end position="2917"/>
    </location>
</feature>
<feature type="sequence variant" id="VAR_043878" description="In dbSNP:rs2249060.">
    <original>T</original>
    <variation>I</variation>
    <location>
        <position position="539"/>
    </location>
</feature>
<feature type="sequence variant" id="VAR_043879" description="In dbSNP:rs2839223." evidence="5 21 22">
    <original>G</original>
    <variation>E</variation>
    <location>
        <position position="704"/>
    </location>
</feature>
<feature type="sequence variant" id="VAR_043880" description="In dbSNP:rs2839227." evidence="5">
    <original>T</original>
    <variation>A</variation>
    <location>
        <position position="879"/>
    </location>
</feature>
<feature type="sequence variant" id="VAR_043881" description="In dbSNP:rs6518289." evidence="5 7 21">
    <original>V</original>
    <variation>A</variation>
    <location>
        <position position="1038"/>
    </location>
</feature>
<feature type="sequence variant" id="VAR_043882" description="In dbSNP:rs7279204.">
    <original>R</original>
    <variation>C</variation>
    <location>
        <position position="1163"/>
    </location>
</feature>
<feature type="sequence variant" id="VAR_043883" description="In dbSNP:rs35044802.">
    <original>A</original>
    <variation>T</variation>
    <location>
        <position position="1194"/>
    </location>
</feature>
<feature type="sequence variant" id="VAR_069420" description="Found in a patient with intellectual disability, no speech, facial and limbs dysmorphisms; dbSNP:rs143796569." evidence="15">
    <original>G</original>
    <variation>R</variation>
    <location>
        <position position="1452"/>
    </location>
</feature>
<feature type="sequence variant" id="VAR_043884" description="In dbSNP:rs6518291.">
    <original>I</original>
    <variation>V</variation>
    <location>
        <position position="1639"/>
    </location>
</feature>
<feature type="sequence variant" id="VAR_043885" description="In dbSNP:rs35940413.">
    <original>N</original>
    <variation>S</variation>
    <location>
        <position position="1841"/>
    </location>
</feature>
<feature type="sequence variant" id="VAR_043886" description="In dbSNP:rs34268261.">
    <original>R</original>
    <variation>H</variation>
    <location>
        <position position="1953"/>
    </location>
</feature>
<feature type="sequence variant" id="VAR_043887" description="In dbSNP:rs34813667.">
    <original>R</original>
    <variation>Q</variation>
    <location>
        <position position="1960"/>
    </location>
</feature>
<feature type="sequence variant" id="VAR_043888" description="In dbSNP:rs2839245.">
    <original>L</original>
    <variation>P</variation>
    <location>
        <position position="2097"/>
    </location>
</feature>
<feature type="sequence variant" id="VAR_043889" description="In dbSNP:rs35978208.">
    <original>H</original>
    <variation>P</variation>
    <location>
        <position position="2125"/>
    </location>
</feature>
<feature type="sequence variant" id="VAR_043890" description="In dbSNP:rs1044998." evidence="5">
    <original>M</original>
    <variation>R</variation>
    <location>
        <position position="2188"/>
    </location>
</feature>
<feature type="sequence variant" id="VAR_043891" description="In dbSNP:rs34151633.">
    <original>S</original>
    <variation>P</variation>
    <location>
        <position position="2191"/>
    </location>
</feature>
<feature type="sequence variant" id="VAR_056961" description="In dbSNP:rs35346764.">
    <original>W</original>
    <variation>R</variation>
    <location>
        <position position="2239"/>
    </location>
</feature>
<feature type="sequence variant" id="VAR_056962" description="In dbSNP:rs2070425.">
    <original>P</original>
    <variation>L</variation>
    <location>
        <position position="2274"/>
    </location>
</feature>
<feature type="sequence variant" id="VAR_056963" description="In dbSNP:rs35848602.">
    <original>P</original>
    <variation>R</variation>
    <location>
        <position position="2329"/>
    </location>
</feature>
<feature type="sequence variant" id="VAR_056964" description="In dbSNP:rs7277175.">
    <original>Q</original>
    <variation>R</variation>
    <location>
        <position position="2361"/>
    </location>
</feature>
<feature type="sequence variant" id="VAR_069421" description="Found in a patient with intellectual disability, no speech, facial and limbs dysmorphisms; dbSNP:rs371893416." evidence="15">
    <original>R</original>
    <variation>Q</variation>
    <location>
        <position position="2424"/>
    </location>
</feature>
<feature type="sequence variant" id="VAR_056965" description="In dbSNP:rs2839256." evidence="5">
    <original>A</original>
    <variation>T</variation>
    <location>
        <position position="2549"/>
    </location>
</feature>
<feature type="sequence variant" id="VAR_056966" description="In dbSNP:rs8131693.">
    <original>R</original>
    <variation>Q</variation>
    <location>
        <position position="2625"/>
    </location>
</feature>
<feature type="sequence variant" id="VAR_056967" description="In dbSNP:rs2070426.">
    <original>Q</original>
    <variation>H</variation>
    <location>
        <position position="2659"/>
    </location>
</feature>
<feature type="sequence variant" id="VAR_056968" description="In dbSNP:rs743346.">
    <original>R</original>
    <variation>H</variation>
    <location>
        <position position="2753"/>
    </location>
</feature>
<feature type="sequence variant" id="VAR_056969" description="In dbSNP:rs2073376.">
    <original>Q</original>
    <variation>R</variation>
    <location>
        <position position="2792"/>
    </location>
</feature>
<feature type="sequence variant" id="VAR_056970" description="In dbSNP:rs35147998.">
    <original>A</original>
    <variation>T</variation>
    <location>
        <position position="2903"/>
    </location>
</feature>
<feature type="sequence variant" id="VAR_056971" description="In dbSNP:rs35881595.">
    <original>L</original>
    <variation>P</variation>
    <location>
        <position position="2975"/>
    </location>
</feature>
<feature type="sequence variant" id="VAR_056972" description="In dbSNP:rs4818842.">
    <original>S</original>
    <variation>G</variation>
    <location>
        <position position="3091"/>
    </location>
</feature>
<feature type="sequence variant" id="VAR_056973" description="In dbSNP:rs2073380.">
    <original>R</original>
    <variation>S</variation>
    <location>
        <position position="3245"/>
    </location>
</feature>
<feature type="mutagenesis site" description="Produces non-cleavable protein which remains on centrosomes in late mitosis until its levels eventually drop in cells undergoing cytokinesis." evidence="13 17">
    <original>R</original>
    <variation>A</variation>
    <location>
        <position position="2231"/>
    </location>
</feature>
<feature type="mutagenesis site" description="Stabilizes the C-terminal fragment produced by cleavage." evidence="13">
    <original>K</original>
    <variation>M</variation>
    <location>
        <position position="2232"/>
    </location>
</feature>
<feature type="mutagenesis site" description="Decrease in calmodulin binding." evidence="4">
    <original>FR</original>
    <variation>AA</variation>
    <location>
        <begin position="3196"/>
        <end position="3197"/>
    </location>
</feature>
<feature type="mutagenesis site" description="Decrease in calmodulin binding." evidence="4">
    <original>V</original>
    <variation>A</variation>
    <location>
        <position position="3203"/>
    </location>
</feature>
<feature type="mutagenesis site" description="Decrease in calmodulin binding." evidence="4">
    <original>RL</original>
    <variation>AA</variation>
    <location>
        <begin position="3208"/>
        <end position="3209"/>
    </location>
</feature>
<feature type="sequence conflict" description="In Ref. 1; AAD10838." evidence="24" ref="1">
    <original>Y</original>
    <variation>F</variation>
    <location>
        <position position="703"/>
    </location>
</feature>
<feature type="sequence conflict" description="In Ref. 1; AAD10838." evidence="24" ref="1">
    <original>F</original>
    <variation>L</variation>
    <location>
        <position position="789"/>
    </location>
</feature>
<feature type="sequence conflict" description="In Ref. 1; AAD10838." evidence="24" ref="1">
    <original>G</original>
    <variation>A</variation>
    <location>
        <position position="819"/>
    </location>
</feature>
<feature type="sequence conflict" description="In Ref. 1; AAD10838." evidence="24" ref="1">
    <location>
        <begin position="890"/>
        <end position="900"/>
    </location>
</feature>
<feature type="sequence conflict" description="In Ref. 1; AAD10838." evidence="24" ref="1">
    <original>S</original>
    <variation>T</variation>
    <location>
        <position position="967"/>
    </location>
</feature>
<feature type="sequence conflict" description="In Ref. 1; AAD10838." evidence="24" ref="1">
    <original>E</original>
    <variation>K</variation>
    <location>
        <position position="1024"/>
    </location>
</feature>
<feature type="sequence conflict" description="In Ref. 7; BAC04252." evidence="24" ref="7">
    <original>T</original>
    <variation>A</variation>
    <location>
        <position position="1036"/>
    </location>
</feature>
<feature type="sequence conflict" description="In Ref. 1; AAD10838." evidence="24" ref="1">
    <original>I</original>
    <variation>L</variation>
    <location>
        <position position="1287"/>
    </location>
</feature>
<feature type="sequence conflict" description="In Ref. 1; AAD10838." evidence="24" ref="1">
    <original>K</original>
    <variation>T</variation>
    <location>
        <position position="1317"/>
    </location>
</feature>
<feature type="sequence conflict" description="In Ref. 1; AAD10838." evidence="24" ref="1">
    <original>Q</original>
    <variation>H</variation>
    <location>
        <position position="1534"/>
    </location>
</feature>
<feature type="sequence conflict" description="In Ref. 1; AAD10838." evidence="24" ref="1">
    <original>Y</original>
    <variation>S</variation>
    <location>
        <position position="3136"/>
    </location>
</feature>
<feature type="sequence conflict" description="In Ref. 1; AAD10838." evidence="24" ref="1">
    <original>E</original>
    <variation>G</variation>
    <location>
        <position position="3300"/>
    </location>
</feature>
<sequence length="3336" mass="378037">MEVEQEQRRRKVEAGRTKLAHFRQRKTKGDSSHSEKKTAKRKGSAVDASVQEESPVTKEDSALCGGGDICKSTSCDDTPDGAGGAFAAQPEDCDGEKREDLEQLQQKQVNDHPPEQCGMFTVSDHPPEQHGMFTVGDHPPEQRGMFTVSDHPPEQHGMFTVSDHPPEQRGMFTISDHQPEQRGMFTVSDHTPEQRGIFTISDHPAEQRGMFTKECEQECELAITDLESGREDEAGLHQSQAVHGLELEALRLSLSNMHTAQLELTQANLQKEKETALTELREMLNSRRAQELALLQSRQQHELELLREQHAREKEEVVLRCGQEAAELKEKLQSEMEKNAQIVKTLKEDWESEKDLCLENLRKELSAKHQSEMEDLQNQFQKELAEQRAELEKIFQDKNQAERALRNLESHHQAAIEKLREDLQSEHGRCLEDLEFKFKESEKEKQLELENLQASYEDLKAQSQEEIRRLWSQLDSARTSRQELSELHEQLLARTSRVEDLEQLKQREKTQHESELEQLRIYFEKKLRDAEKTYQEDLTLLQQRLQGAREDALLDSVEVGLSCVGLEEKPEKGRKDHVDELEPERHKESLPRFQAELEESHRHQLEALESPLCIQHEGHVSDRCCVETSALGHEWRLEPSEGHSQELPWVHLQGVQDGDLEADTERAARVLGLETEHKVQLSLLQTELKEEIELLKIENRNLYGKLQHETRLKDDLEKVKHNLIEDHQKELNNAKQKTELMKQEFQRKETDWKVMKEELQREAEEKLTLMLLELREKAESEKQTIINKFELREAEMRQLQDQQAAQILDLERSLTEQQGRLQQLEQDLTSDDALHCSQCGREPPTAQDGELAALHVKEDCALQLMLARSRFLEERKEITEKFSAEQDAFLQEAQEQHARELQLLQERHQQQLLSVTAELEARHQAALGELTASLESKQGALLAARVAELQTKHAADLGALETRHLSSLDSLESCYLSEFQTIREEHRQALELLRADFEEQLWKKDSLHQTILTQELEKLKRKHEGELQSVRDHLRTEVSTELAGTVAHELQGVHQGEFGSEKKTALHEKEETLRLQSAQAQPFHQEEKESLSLQLQKKNHQVQQLKDQVLSLSHEIEECRSELEVLQQRRERENREGANLLSMLKADVNLSHSERGALQDALRRLLGLFGETLRAAVTLRSRIGERVGLCLDDAGAGLALSTAPALEETWSDVALPELDRTLSECAEMSSVAEISSHMRESFLMSPESVRECEQPIRRVFQSLSLAVDGLMEMALDSSRQLEEARQIHSRFEKEFSFKNEETAQVVRKHQELLECLKEESAAKAELALELHKTQGTLEGFKVETADLKEVLAGKEDSEHRLVLELESLRRQLQQAAQEQAALREECTRLWSRGEATATDAEAREAALRKEVEDLTKEQSETRKQAEKDRSALLSQMKILESELEEQLSQHRGCAKQAEAVTALEQQVASLDKHLRNQRQFMDEQAAEREHEREEFQQEIQRLEGQLRQAAKPQPWGPRDSQQAPLDGEVELLQQKLREKLDEFNELAIQKESADRQVLMQEEEIKRLEEMNINIRKKVAQLQEEVEKQKNIVKGLEQDKEVLKKQQMSSLLLASTLQSTLDAGRCPEPPSGSPPEGPEIQLEVTQRALLRRESEVLDLKEQLEKMKGDLESKNEEILHLNLKLDMQNSQTAVSLRELEEENTSLKVIYTRSSEIEELKATIENLQENQKRLQKEKAEEIEQLHEVIEKLQHELSLMGPVVHEVSDSQAGSLQSELLCSQAGGPRGQALQGELEAALEAKEALSRLLADQERRHSQALEALQQRLQGAEEAAELQLAELERNVALREAEVEDMASRIQEFEAALKAKEATIAERNLEIDALNQRKAAHSAELEAVLLALARIRRALEQQPLAAGAAPPELQWLRAQCARLSRQLQVLHQRFLRCQVELDRRQARRATAHTRVPGAHPQPRMDGGAKAQVTGDVEASHDAALEPVVPDPQGDLQPVLVTLKDAPLCKQEGVMSVLTVCQRQLQSELLLVKNEMRLSLEDGGKGKEKVLEDCQLPKVDLVAQVKQLQEKLNRLLYSMTFQNVDAADTKSLWPMASAHLLESSWSDDSCDGEEPDISPHIDTCDANTATGGVTDVIKNQAIDACDANTTPGGVTDVIKNWDSLIPDEMPDSPIQEKSECQDMSLSSPTSVLGGSRHQSHTAEAGPRKSPVGMLDLSSWSSPEVLRKDWTLEPWPSLPVTPHSGALSLCSADTSLGDRADTSLPQTQGPGLLCSPGVSAAALALQWAESPPADDHHVQRTAVEKDVEDFITTSFDSQETLSSPPPGLEGKADRSEKSDGSGFGARLSPGSGGPEAQTAGPVTPASISGRFQPLPEAMKEKEVRPKHVKALLQMVRDESHQILALSEGLAPPSGEPHPPRKEDEIQDISLHGGKTQEVPTACPDWRGDLLQVVQEAFEKEQEMQGVELQPRLSGSDLGGHSSLLERLEKIIREQGDLQEKSLEHLRLPDRSSLLSEIQALRAQLRMTHLQNQEKLQHLRTALTSAEARGSQQEHQLRRQVELLAYKVEQEKCIAGDLQKTLSEEQEKANSVQKLLAAEQTVVRDLKSDLCESRQKSEQLSRSLCEVQQEVLQLRSMLSSKENELKAALQELESEQGKGRALQSQLEEEQLRHLQRESQSAKALEELRASLETQRAQSSRLCVALKHEQTAKDNLQKELRIEHSRCEALLAQERSQLSELQKDLAAEKSRTLELSEALRHERLLTEQLSQRTQEACVHQDTQAHHALLQKLKEEKSRVVDLQAMLEKVQQQALHSQQQLEAEAQKHCEALRREKEVSATLKSTVEALHTQKRELRCSLEREREKPAWLQAELEQSHPRLKEQEGRKAARRSAEARQSPAAAEQWRKWQRDKEKLRELELQRQRDLHKIKQLQQTVRDLESKDEVPGSRLHLGSARRAAGSDADHLREQQRELEAMRQRLLSAARLLTSFTSQAVDRTVNDWTSSNEKAVMSLLHTLEELKSDLSRPTSSQKKMAAELQFQFVDVLLKDNVSLTKALSTVTQEKLELSRAVSKLEKLLKHHLQKGCSPSRSERSAWKPDETAPQSSLRRPDPGRLPPAASEEAHTSNVKMEKLYLHYLRAESFRKALIYQKKYLLLLIGGFQDSEQETLSMIAHLGVFPSKAERKITSRPFTRFRTAVRVVIAILRLRFLVKKWQEVDRKGALAQGKAPRPGPRARQPQSPPRTRESPPTRDVPSGHTRDPARGRRLAAAASPHSGGRATPSPNSRLERSLTASQDPEHSLTEYIHHLEVIQQRLGGVLPDSTSKKSCHPMIKQ</sequence>
<reference key="1">
    <citation type="journal article" date="2001" name="J. Cell Sci.">
        <title>Kendrin/pericentrin-B, a centrosome protein with homology to pericentrin that complexes with PCM-1.</title>
        <authorList>
            <person name="Li Q."/>
            <person name="Hansen D."/>
            <person name="Killilea A."/>
            <person name="Joshi H.C."/>
            <person name="Palazzo R.E."/>
            <person name="Balczon R."/>
        </authorList>
    </citation>
    <scope>NUCLEOTIDE SEQUENCE [MRNA] (ISOFORM 1)</scope>
    <scope>FUNCTION</scope>
    <scope>SUBUNIT</scope>
    <scope>SUBCELLULAR LOCATION</scope>
    <scope>VARIANTS GLU-704; ALA-879; ALA-1038; ARG-2188 AND THR-2549</scope>
</reference>
<reference key="2">
    <citation type="submission" date="2002-05" db="EMBL/GenBank/DDBJ databases">
        <title>Vertebrate centrosome proteins that share homology with yeast mitotic exit proteins are required for cytokinesis and cell cycle progression.</title>
        <authorList>
            <person name="Gromley A.S."/>
            <person name="Jurczyk A."/>
            <person name="Sillibourne J.E."/>
            <person name="Halilovic E."/>
            <person name="Doxsey S.J."/>
        </authorList>
    </citation>
    <scope>NUCLEOTIDE SEQUENCE [MRNA] (ISOFORM 1)</scope>
    <scope>VARIANT GLU-704</scope>
</reference>
<reference key="3">
    <citation type="journal article" date="1997" name="DNA Res.">
        <title>Prediction of the coding sequences of unidentified human genes. VIII. 78 new cDNA clones from brain which code for large proteins in vitro.</title>
        <authorList>
            <person name="Ishikawa K."/>
            <person name="Nagase T."/>
            <person name="Nakajima D."/>
            <person name="Seki N."/>
            <person name="Ohira M."/>
            <person name="Miyajima N."/>
            <person name="Tanaka A."/>
            <person name="Kotani H."/>
            <person name="Nomura N."/>
            <person name="Ohara O."/>
        </authorList>
    </citation>
    <scope>NUCLEOTIDE SEQUENCE [LARGE SCALE MRNA] (ISOFORM 2)</scope>
    <scope>VARIANTS GLU-704 AND ALA-1038</scope>
    <source>
        <tissue>Brain</tissue>
    </source>
</reference>
<reference key="4">
    <citation type="journal article" date="2002" name="DNA Res.">
        <title>Construction of expression-ready cDNA clones for KIAA genes: manual curation of 330 KIAA cDNA clones.</title>
        <authorList>
            <person name="Nakajima D."/>
            <person name="Okazaki N."/>
            <person name="Yamakawa H."/>
            <person name="Kikuno R."/>
            <person name="Ohara O."/>
            <person name="Nagase T."/>
        </authorList>
    </citation>
    <scope>SEQUENCE REVISION TO 3023</scope>
</reference>
<reference key="5">
    <citation type="submission" date="2003-08" db="EMBL/GenBank/DDBJ databases">
        <authorList>
            <person name="Ohara O."/>
        </authorList>
    </citation>
    <scope>SEQUENCE REVISION</scope>
</reference>
<reference key="6">
    <citation type="journal article" date="2000" name="Nature">
        <title>The DNA sequence of human chromosome 21.</title>
        <authorList>
            <person name="Hattori M."/>
            <person name="Fujiyama A."/>
            <person name="Taylor T.D."/>
            <person name="Watanabe H."/>
            <person name="Yada T."/>
            <person name="Park H.-S."/>
            <person name="Toyoda A."/>
            <person name="Ishii K."/>
            <person name="Totoki Y."/>
            <person name="Choi D.-K."/>
            <person name="Groner Y."/>
            <person name="Soeda E."/>
            <person name="Ohki M."/>
            <person name="Takagi T."/>
            <person name="Sakaki Y."/>
            <person name="Taudien S."/>
            <person name="Blechschmidt K."/>
            <person name="Polley A."/>
            <person name="Menzel U."/>
            <person name="Delabar J."/>
            <person name="Kumpf K."/>
            <person name="Lehmann R."/>
            <person name="Patterson D."/>
            <person name="Reichwald K."/>
            <person name="Rump A."/>
            <person name="Schillhabel M."/>
            <person name="Schudy A."/>
            <person name="Zimmermann W."/>
            <person name="Rosenthal A."/>
            <person name="Kudoh J."/>
            <person name="Shibuya K."/>
            <person name="Kawasaki K."/>
            <person name="Asakawa S."/>
            <person name="Shintani A."/>
            <person name="Sasaki T."/>
            <person name="Nagamine K."/>
            <person name="Mitsuyama S."/>
            <person name="Antonarakis S.E."/>
            <person name="Minoshima S."/>
            <person name="Shimizu N."/>
            <person name="Nordsiek G."/>
            <person name="Hornischer K."/>
            <person name="Brandt P."/>
            <person name="Scharfe M."/>
            <person name="Schoen O."/>
            <person name="Desario A."/>
            <person name="Reichelt J."/>
            <person name="Kauer G."/>
            <person name="Bloecker H."/>
            <person name="Ramser J."/>
            <person name="Beck A."/>
            <person name="Klages S."/>
            <person name="Hennig S."/>
            <person name="Riesselmann L."/>
            <person name="Dagand E."/>
            <person name="Wehrmeyer S."/>
            <person name="Borzym K."/>
            <person name="Gardiner K."/>
            <person name="Nizetic D."/>
            <person name="Francis F."/>
            <person name="Lehrach H."/>
            <person name="Reinhardt R."/>
            <person name="Yaspo M.-L."/>
        </authorList>
    </citation>
    <scope>NUCLEOTIDE SEQUENCE [LARGE SCALE GENOMIC DNA]</scope>
</reference>
<reference key="7">
    <citation type="journal article" date="2004" name="Nat. Genet.">
        <title>Complete sequencing and characterization of 21,243 full-length human cDNAs.</title>
        <authorList>
            <person name="Ota T."/>
            <person name="Suzuki Y."/>
            <person name="Nishikawa T."/>
            <person name="Otsuki T."/>
            <person name="Sugiyama T."/>
            <person name="Irie R."/>
            <person name="Wakamatsu A."/>
            <person name="Hayashi K."/>
            <person name="Sato H."/>
            <person name="Nagai K."/>
            <person name="Kimura K."/>
            <person name="Makita H."/>
            <person name="Sekine M."/>
            <person name="Obayashi M."/>
            <person name="Nishi T."/>
            <person name="Shibahara T."/>
            <person name="Tanaka T."/>
            <person name="Ishii S."/>
            <person name="Yamamoto J."/>
            <person name="Saito K."/>
            <person name="Kawai Y."/>
            <person name="Isono Y."/>
            <person name="Nakamura Y."/>
            <person name="Nagahari K."/>
            <person name="Murakami K."/>
            <person name="Yasuda T."/>
            <person name="Iwayanagi T."/>
            <person name="Wagatsuma M."/>
            <person name="Shiratori A."/>
            <person name="Sudo H."/>
            <person name="Hosoiri T."/>
            <person name="Kaku Y."/>
            <person name="Kodaira H."/>
            <person name="Kondo H."/>
            <person name="Sugawara M."/>
            <person name="Takahashi M."/>
            <person name="Kanda K."/>
            <person name="Yokoi T."/>
            <person name="Furuya T."/>
            <person name="Kikkawa E."/>
            <person name="Omura Y."/>
            <person name="Abe K."/>
            <person name="Kamihara K."/>
            <person name="Katsuta N."/>
            <person name="Sato K."/>
            <person name="Tanikawa M."/>
            <person name="Yamazaki M."/>
            <person name="Ninomiya K."/>
            <person name="Ishibashi T."/>
            <person name="Yamashita H."/>
            <person name="Murakawa K."/>
            <person name="Fujimori K."/>
            <person name="Tanai H."/>
            <person name="Kimata M."/>
            <person name="Watanabe M."/>
            <person name="Hiraoka S."/>
            <person name="Chiba Y."/>
            <person name="Ishida S."/>
            <person name="Ono Y."/>
            <person name="Takiguchi S."/>
            <person name="Watanabe S."/>
            <person name="Yosida M."/>
            <person name="Hotuta T."/>
            <person name="Kusano J."/>
            <person name="Kanehori K."/>
            <person name="Takahashi-Fujii A."/>
            <person name="Hara H."/>
            <person name="Tanase T.-O."/>
            <person name="Nomura Y."/>
            <person name="Togiya S."/>
            <person name="Komai F."/>
            <person name="Hara R."/>
            <person name="Takeuchi K."/>
            <person name="Arita M."/>
            <person name="Imose N."/>
            <person name="Musashino K."/>
            <person name="Yuuki H."/>
            <person name="Oshima A."/>
            <person name="Sasaki N."/>
            <person name="Aotsuka S."/>
            <person name="Yoshikawa Y."/>
            <person name="Matsunawa H."/>
            <person name="Ichihara T."/>
            <person name="Shiohata N."/>
            <person name="Sano S."/>
            <person name="Moriya S."/>
            <person name="Momiyama H."/>
            <person name="Satoh N."/>
            <person name="Takami S."/>
            <person name="Terashima Y."/>
            <person name="Suzuki O."/>
            <person name="Nakagawa S."/>
            <person name="Senoh A."/>
            <person name="Mizoguchi H."/>
            <person name="Goto Y."/>
            <person name="Shimizu F."/>
            <person name="Wakebe H."/>
            <person name="Hishigaki H."/>
            <person name="Watanabe T."/>
            <person name="Sugiyama A."/>
            <person name="Takemoto M."/>
            <person name="Kawakami B."/>
            <person name="Yamazaki M."/>
            <person name="Watanabe K."/>
            <person name="Kumagai A."/>
            <person name="Itakura S."/>
            <person name="Fukuzumi Y."/>
            <person name="Fujimori Y."/>
            <person name="Komiyama M."/>
            <person name="Tashiro H."/>
            <person name="Tanigami A."/>
            <person name="Fujiwara T."/>
            <person name="Ono T."/>
            <person name="Yamada K."/>
            <person name="Fujii Y."/>
            <person name="Ozaki K."/>
            <person name="Hirao M."/>
            <person name="Ohmori Y."/>
            <person name="Kawabata A."/>
            <person name="Hikiji T."/>
            <person name="Kobatake N."/>
            <person name="Inagaki H."/>
            <person name="Ikema Y."/>
            <person name="Okamoto S."/>
            <person name="Okitani R."/>
            <person name="Kawakami T."/>
            <person name="Noguchi S."/>
            <person name="Itoh T."/>
            <person name="Shigeta K."/>
            <person name="Senba T."/>
            <person name="Matsumura K."/>
            <person name="Nakajima Y."/>
            <person name="Mizuno T."/>
            <person name="Morinaga M."/>
            <person name="Sasaki M."/>
            <person name="Togashi T."/>
            <person name="Oyama M."/>
            <person name="Hata H."/>
            <person name="Watanabe M."/>
            <person name="Komatsu T."/>
            <person name="Mizushima-Sugano J."/>
            <person name="Satoh T."/>
            <person name="Shirai Y."/>
            <person name="Takahashi Y."/>
            <person name="Nakagawa K."/>
            <person name="Okumura K."/>
            <person name="Nagase T."/>
            <person name="Nomura N."/>
            <person name="Kikuchi H."/>
            <person name="Masuho Y."/>
            <person name="Yamashita R."/>
            <person name="Nakai K."/>
            <person name="Yada T."/>
            <person name="Nakamura Y."/>
            <person name="Ohara O."/>
            <person name="Isogai T."/>
            <person name="Sugano S."/>
        </authorList>
    </citation>
    <scope>NUCLEOTIDE SEQUENCE [LARGE SCALE MRNA] OF 787-1533 (ISOFORM 1)</scope>
    <scope>VARIANT ALA-1038</scope>
    <source>
        <tissue>Trachea</tissue>
    </source>
</reference>
<reference key="8">
    <citation type="journal article" date="2000" name="Proc. Natl. Acad. Sci. U.S.A.">
        <title>Identification of a human centrosomal calmodulin-binding protein that shares homology with pericentrin.</title>
        <authorList>
            <person name="Flory M.R."/>
            <person name="Moser M.J."/>
            <person name="Monnat R.J. Jr."/>
            <person name="Davis T.N."/>
        </authorList>
    </citation>
    <scope>FUNCTION</scope>
    <scope>SUBCELLULAR LOCATION</scope>
    <scope>TISSUE SPECIFICITY</scope>
    <scope>CALMODULIN-BINDING DOMAIN</scope>
    <scope>MUTAGENESIS OF 3196-PHE-ARG-3197; VAL-3203 AND 3208-ARG-LEU-3209</scope>
</reference>
<reference key="9">
    <citation type="journal article" date="2003" name="Nature">
        <title>Proteomic characterization of the human centrosome by protein correlation profiling.</title>
        <authorList>
            <person name="Andersen J.S."/>
            <person name="Wilkinson C.J."/>
            <person name="Mayor T."/>
            <person name="Mortensen P."/>
            <person name="Nigg E.A."/>
            <person name="Mann M."/>
        </authorList>
    </citation>
    <scope>IDENTIFICATION BY MASS SPECTROMETRY</scope>
    <scope>SUBCELLULAR LOCATION [LARGE SCALE ANALYSIS]</scope>
    <source>
        <tissue>Lymphoblast</tissue>
    </source>
</reference>
<reference key="10">
    <citation type="journal article" date="2008" name="Biochem. Biophys. Res. Commun.">
        <title>DISC1-kendrin interaction is involved in centrosomal microtubule network formation.</title>
        <authorList>
            <person name="Shimizu S."/>
            <person name="Matsuzaki S."/>
            <person name="Hattori T."/>
            <person name="Kumamoto N."/>
            <person name="Miyoshi K."/>
            <person name="Katayama T."/>
            <person name="Tohyama M."/>
        </authorList>
    </citation>
    <scope>FUNCTION</scope>
    <scope>INTERACTION WITH DISC1</scope>
    <scope>SUBCELLULAR LOCATION</scope>
</reference>
<reference key="11">
    <citation type="journal article" date="2008" name="Nat. Genet.">
        <title>Mutations in pericentrin cause Seckel syndrome with defective ATR-dependent DNA damage signaling.</title>
        <authorList>
            <person name="Griffith E."/>
            <person name="Walker S."/>
            <person name="Martin C.-A."/>
            <person name="Vagnarelli P."/>
            <person name="Stiff T."/>
            <person name="Vernay B."/>
            <person name="Al Sanna N."/>
            <person name="Saggar A."/>
            <person name="Hamel B."/>
            <person name="Earnshaw W.C."/>
            <person name="Jeggo P.A."/>
            <person name="Jackson A.P."/>
            <person name="O'Driscoll M."/>
        </authorList>
    </citation>
    <scope>INVOLVEMENT IN MOPD2</scope>
</reference>
<reference key="12">
    <citation type="journal article" date="2008" name="Science">
        <title>Mutations in the pericentrin (PCNT) gene cause primordial dwarfism.</title>
        <authorList>
            <person name="Rauch A."/>
            <person name="Thiel C.T."/>
            <person name="Schindler D."/>
            <person name="Wick U."/>
            <person name="Crow Y.J."/>
            <person name="Ekici A.B."/>
            <person name="van Essen A.J."/>
            <person name="Goecke T.O."/>
            <person name="Al-Gazali L."/>
            <person name="Chrzanowska K.H."/>
            <person name="Zweier C."/>
            <person name="Brunner H.G."/>
            <person name="Becker K."/>
            <person name="Curry C.J."/>
            <person name="Dallapiccola B."/>
            <person name="Devriendt K."/>
            <person name="Doerfler A."/>
            <person name="Kinning E."/>
            <person name="Megarbane A."/>
            <person name="Meinecke P."/>
            <person name="Semple R.K."/>
            <person name="Spranger S."/>
            <person name="Toutain A."/>
            <person name="Trembath R.C."/>
            <person name="Voss E."/>
            <person name="Wilson L."/>
            <person name="Hennekam R."/>
            <person name="de Zegher F."/>
            <person name="Doerr H.-G."/>
            <person name="Reis A."/>
        </authorList>
    </citation>
    <scope>INVOLVEMENT IN MOPD2</scope>
</reference>
<reference key="13">
    <citation type="journal article" date="2009" name="Sci. Signal.">
        <title>Quantitative phosphoproteomic analysis of T cell receptor signaling reveals system-wide modulation of protein-protein interactions.</title>
        <authorList>
            <person name="Mayya V."/>
            <person name="Lundgren D.H."/>
            <person name="Hwang S.-I."/>
            <person name="Rezaul K."/>
            <person name="Wu L."/>
            <person name="Eng J.K."/>
            <person name="Rodionov V."/>
            <person name="Han D.K."/>
        </authorList>
    </citation>
    <scope>PHOSPHORYLATION [LARGE SCALE ANALYSIS] AT SER-2177 AND SER-2327</scope>
    <scope>IDENTIFICATION BY MASS SPECTROMETRY [LARGE SCALE ANALYSIS]</scope>
    <source>
        <tissue>Leukemic T-cell</tissue>
    </source>
</reference>
<reference key="14">
    <citation type="journal article" date="2010" name="Biochem. Biophys. Res. Commun.">
        <title>Involvement of a centrosomal protein kendrin in the maintenance of centrosome cohesion by modulating Nek2A kinase activity.</title>
        <authorList>
            <person name="Matsuo K."/>
            <person name="Nishimura T."/>
            <person name="Hayakawa A."/>
            <person name="Ono Y."/>
            <person name="Takahashi M."/>
        </authorList>
    </citation>
    <scope>FUNCTION</scope>
    <scope>INTERACTION WITH NEK2</scope>
</reference>
<reference key="15">
    <citation type="journal article" date="2010" name="J. Biol. Chem.">
        <title>Conserved motif of CDK5RAP2 mediates its localization to centrosomes and the Golgi complex.</title>
        <authorList>
            <person name="Wang Z."/>
            <person name="Wu T."/>
            <person name="Shi L."/>
            <person name="Zhang L."/>
            <person name="Zheng W."/>
            <person name="Qu J.Y."/>
            <person name="Niu R."/>
            <person name="Qi R.Z."/>
        </authorList>
    </citation>
    <scope>INTERACTION WITH CDK5RAP2</scope>
</reference>
<reference key="16">
    <citation type="journal article" date="2010" name="Sci. Signal.">
        <title>Quantitative phosphoproteomics reveals widespread full phosphorylation site occupancy during mitosis.</title>
        <authorList>
            <person name="Olsen J.V."/>
            <person name="Vermeulen M."/>
            <person name="Santamaria A."/>
            <person name="Kumar C."/>
            <person name="Miller M.L."/>
            <person name="Jensen L.J."/>
            <person name="Gnad F."/>
            <person name="Cox J."/>
            <person name="Jensen T.S."/>
            <person name="Nigg E.A."/>
            <person name="Brunak S."/>
            <person name="Mann M."/>
        </authorList>
    </citation>
    <scope>PHOSPHORYLATION [LARGE SCALE ANALYSIS] AT THR-191; SER-682; SER-2044; SER-2477; SER-2486 AND SER-3302</scope>
    <scope>IDENTIFICATION BY MASS SPECTROMETRY [LARGE SCALE ANALYSIS]</scope>
    <source>
        <tissue>Cervix carcinoma</tissue>
    </source>
</reference>
<reference key="17">
    <citation type="journal article" date="2011" name="BMC Syst. Biol.">
        <title>Initial characterization of the human central proteome.</title>
        <authorList>
            <person name="Burkard T.R."/>
            <person name="Planyavsky M."/>
            <person name="Kaupe I."/>
            <person name="Breitwieser F.P."/>
            <person name="Buerckstuemmer T."/>
            <person name="Bennett K.L."/>
            <person name="Superti-Furga G."/>
            <person name="Colinge J."/>
        </authorList>
    </citation>
    <scope>IDENTIFICATION BY MASS SPECTROMETRY [LARGE SCALE ANALYSIS]</scope>
</reference>
<reference key="18">
    <citation type="journal article" date="2012" name="Cell Cycle">
        <title>Separase-dependent cleavage of pericentrin B is necessary and sufficient for centriole disengagement during mitosis.</title>
        <authorList>
            <person name="Lee K."/>
            <person name="Rhee K."/>
        </authorList>
    </citation>
    <scope>CLEAVAGE</scope>
    <scope>MUTAGENESIS OF ARG-2231 AND LYS-2232</scope>
</reference>
<reference key="19">
    <citation type="journal article" date="2012" name="J. Cell Sci.">
        <title>The centriolar satellite protein Cep131 is important for genome stability.</title>
        <authorList>
            <person name="Staples C.J."/>
            <person name="Myers K.N."/>
            <person name="Beveridge R.D."/>
            <person name="Patil A.A."/>
            <person name="Lee A.J."/>
            <person name="Swanton C."/>
            <person name="Howell M."/>
            <person name="Boulton S.J."/>
            <person name="Collis S.J."/>
        </authorList>
    </citation>
    <scope>INTERACTION WITH CEP131</scope>
    <scope>SUBCELLULAR LOCATION</scope>
</reference>
<reference key="20">
    <citation type="journal article" date="2013" name="J. Proteome Res.">
        <title>Toward a comprehensive characterization of a human cancer cell phosphoproteome.</title>
        <authorList>
            <person name="Zhou H."/>
            <person name="Di Palma S."/>
            <person name="Preisinger C."/>
            <person name="Peng M."/>
            <person name="Polat A.N."/>
            <person name="Heck A.J."/>
            <person name="Mohammed S."/>
        </authorList>
    </citation>
    <scope>PHOSPHORYLATION [LARGE SCALE ANALYSIS] AT SER-44; SER-188; THR-191; SER-1245; SER-1653; SER-2192; SER-2352; SER-2355 AND SER-2477</scope>
    <scope>IDENTIFICATION BY MASS SPECTROMETRY [LARGE SCALE ANALYSIS]</scope>
    <source>
        <tissue>Cervix carcinoma</tissue>
        <tissue>Erythroleukemia</tissue>
    </source>
</reference>
<reference key="21">
    <citation type="journal article" date="2014" name="J. Proteomics">
        <title>An enzyme assisted RP-RPLC approach for in-depth analysis of human liver phosphoproteome.</title>
        <authorList>
            <person name="Bian Y."/>
            <person name="Song C."/>
            <person name="Cheng K."/>
            <person name="Dong M."/>
            <person name="Wang F."/>
            <person name="Huang J."/>
            <person name="Sun D."/>
            <person name="Wang L."/>
            <person name="Ye M."/>
            <person name="Zou H."/>
        </authorList>
    </citation>
    <scope>PHOSPHORYLATION [LARGE SCALE ANALYSIS] AT SER-610</scope>
    <scope>IDENTIFICATION BY MASS SPECTROMETRY [LARGE SCALE ANALYSIS]</scope>
    <source>
        <tissue>Liver</tissue>
    </source>
</reference>
<reference key="22">
    <citation type="journal article" date="2016" name="Cell. Mol. Life Sci.">
        <title>HSP70 regulates the function of mitotic centrosomes.</title>
        <authorList>
            <person name="Fang C.T."/>
            <person name="Kuo H.H."/>
            <person name="Pan T.S."/>
            <person name="Yu F.C."/>
            <person name="Yih L.H."/>
        </authorList>
    </citation>
    <scope>SUBCELLULAR LOCATION</scope>
</reference>
<reference key="23">
    <citation type="journal article" date="2012" name="N. Engl. J. Med.">
        <title>Diagnostic exome sequencing in persons with severe intellectual disability.</title>
        <authorList>
            <person name="de Ligt J."/>
            <person name="Willemsen M.H."/>
            <person name="van Bon B.W."/>
            <person name="Kleefstra T."/>
            <person name="Yntema H.G."/>
            <person name="Kroes T."/>
            <person name="Vulto-van Silfhout A.T."/>
            <person name="Koolen D.A."/>
            <person name="de Vries P."/>
            <person name="Gilissen C."/>
            <person name="del Rosario M."/>
            <person name="Hoischen A."/>
            <person name="Scheffer H."/>
            <person name="de Vries B.B."/>
            <person name="Brunner H.G."/>
            <person name="Veltman J.A."/>
            <person name="Vissers L.E."/>
        </authorList>
    </citation>
    <scope>VARIANTS ARG-1452 AND GLN-2424</scope>
</reference>
<reference key="24">
    <citation type="journal article" date="2014" name="J. Cell Sci.">
        <title>Ccdc13 is a novel human centriolar satellite protein required for ciliogenesis and genome stability.</title>
        <authorList>
            <person name="Staples C.J."/>
            <person name="Myers K.N."/>
            <person name="Beveridge R.D."/>
            <person name="Patil A.A."/>
            <person name="Howard A.E."/>
            <person name="Barone G."/>
            <person name="Lee A.J."/>
            <person name="Swanton C."/>
            <person name="Howell M."/>
            <person name="Maslen S."/>
            <person name="Skehel J.M."/>
            <person name="Boulton S.J."/>
            <person name="Collis S.J."/>
        </authorList>
    </citation>
    <scope>INTERACTION WITH CCDC13</scope>
</reference>
<reference key="25">
    <citation type="journal article" date="2015" name="Cell">
        <title>ATF5 Connects the Pericentriolar Materials to the Proximal End of the Mother Centriole.</title>
        <authorList>
            <person name="Madarampalli B."/>
            <person name="Yuan Y."/>
            <person name="Liu D."/>
            <person name="Lengel K."/>
            <person name="Xu Y."/>
            <person name="Li G."/>
            <person name="Yang J."/>
            <person name="Liu X."/>
            <person name="Lu Z."/>
            <person name="Liu D.X."/>
        </authorList>
    </citation>
    <scope>INTERACTION WITH ATF5</scope>
</reference>
<reference key="26">
    <citation type="journal article" date="2015" name="Nat. Cell Biol.">
        <title>Degradation of Cep68 and PCNT cleavage mediate Cep215 removal from the PCM to allow centriole separation, disengagement and licensing.</title>
        <authorList>
            <person name="Pagan J.K."/>
            <person name="Marzio A."/>
            <person name="Jones M.J."/>
            <person name="Saraf A."/>
            <person name="Jallepalli P.V."/>
            <person name="Florens L."/>
            <person name="Washburn M.P."/>
            <person name="Pagano M."/>
        </authorList>
    </citation>
    <scope>INTERACTION WITH CEP68</scope>
    <scope>MUTAGENESIS OF ARG-2231</scope>
</reference>
<reference key="27">
    <citation type="journal article" date="2019" name="Nat. Microbiol.">
        <title>Centrosomal protein TRIM43 restricts herpesvirus infection by regulating nuclear lamina integrity.</title>
        <authorList>
            <person name="Full F."/>
            <person name="van Gent M."/>
            <person name="Sparrer K.M.J."/>
            <person name="Chiang C."/>
            <person name="Zurenski M.A."/>
            <person name="Scherer M."/>
            <person name="Brockmeyer N.H."/>
            <person name="Heinzerling L."/>
            <person name="Stuerzl M."/>
            <person name="Korn K."/>
            <person name="Stamminger T."/>
            <person name="Ensser A."/>
            <person name="Gack M.U."/>
        </authorList>
    </citation>
    <scope>FUNCTION</scope>
    <scope>SUBCELLULAR LOCATION</scope>
    <scope>UBIQUITINATION BY TRIM43</scope>
</reference>
<comment type="function">
    <text evidence="4 5 10 12 20">Integral component of the filamentous matrix of the centrosome involved in the initial establishment of organized microtubule arrays in both mitosis and meiosis. Plays a role, together with DISC1, in the microtubule network formation. Is an integral component of the pericentriolar material (PCM). May play an important role in preventing premature centrosome splitting during interphase by inhibiting NEK2 kinase activity at the centrosome.</text>
</comment>
<comment type="subunit">
    <text evidence="1 5 10 11 12 14 16 17 18">Interacts with CHD3. Interacts with CHD4; the interaction regulates centrosome integrity (By similarity). Interacts with DISC1 and PCM1. Binds calmodulin. Interacts with CDK5RAP2; the interaction is leading to centrosomal localization of PCNT and CDK5RAP2. Interacts with isoform 1 of NEK2. Interacts with CEP131. Interacts with CCDC13 (PubMed:24816561). Interacts with CEP68 (PubMed:25503564). Interacts with ATF5; the ATF5:PCNT:polyglutamylated tubulin (PGT) tripartite unites the mother centriole and the pericentriolar material (PCM) in the centrosome (PubMed:26213385).</text>
</comment>
<comment type="interaction">
    <interactant intactId="EBI-530012">
        <id>O95613</id>
    </interactant>
    <interactant intactId="EBI-9051024">
        <id>Q76N32</id>
        <label>CEP68</label>
    </interactant>
    <organismsDiffer>false</organismsDiffer>
    <experiments>3</experiments>
</comment>
<comment type="interaction">
    <interactant intactId="EBI-530012">
        <id>O95613</id>
    </interactant>
    <interactant intactId="EBI-529989">
        <id>Q9NRI5</id>
        <label>DISC1</label>
    </interactant>
    <organismsDiffer>false</organismsDiffer>
    <experiments>5</experiments>
</comment>
<comment type="interaction">
    <interactant intactId="EBI-530012">
        <id>O95613</id>
    </interactant>
    <interactant intactId="EBI-741421">
        <id>Q15154</id>
        <label>PCM1</label>
    </interactant>
    <organismsDiffer>false</organismsDiffer>
    <experiments>8</experiments>
</comment>
<comment type="subcellular location">
    <subcellularLocation>
        <location evidence="4 5 6 10 14 19 20">Cytoplasm</location>
        <location evidence="4 5 6 10 14 19 20">Cytoskeleton</location>
        <location evidence="4 5 6 10 14 19 20">Microtubule organizing center</location>
        <location evidence="4 5 6 10 14 19 20">Centrosome</location>
    </subcellularLocation>
    <text>Centrosomal at all stages of the cell cycle. Remains associated with centrosomes following microtubule depolymerization. Colocalized with DISC1 at the centrosome.</text>
</comment>
<comment type="alternative products">
    <event type="alternative splicing"/>
    <isoform>
        <id>O95613-1</id>
        <name>1</name>
        <sequence type="displayed"/>
    </isoform>
    <isoform>
        <id>O95613-2</id>
        <name>2</name>
        <sequence type="described" ref="VSP_040104 VSP_040105"/>
    </isoform>
</comment>
<comment type="tissue specificity">
    <text evidence="4">Expressed in all tissues tested, including placenta, liver, kidney and thymus.</text>
</comment>
<comment type="domain">
    <text>Composed of a coiled-coil central region flanked by non-helical N- and C-terminals.</text>
</comment>
<comment type="PTM">
    <text evidence="13 17">Cleaved during mitotis which leads to removal of CDK5RAP2 from the centrosome and promotes centriole disengagement and subsequent centriole separation (PubMed:22722493, PubMed:25503564). The C-terminal fragment is rapidly degraded following cleavage (PubMed:22722493).</text>
</comment>
<comment type="PTM">
    <text evidence="20">Ubiquitinated by TRIM43; leading to proteasomal degradation.</text>
</comment>
<comment type="disease" evidence="8 9">
    <disease id="DI-01976">
        <name>Microcephalic osteodysplastic primordial dwarfism 2</name>
        <acronym>MOPD2</acronym>
        <description>Adults with this rare inherited condition have an average height of 100 centimeters and a brain size comparable to that of a 3-month-old baby, but are of near-normal intelligence.</description>
        <dbReference type="MIM" id="210720"/>
    </disease>
    <text>The disease is caused by variants affecting the gene represented in this entry.</text>
</comment>
<comment type="sequence caution" evidence="24">
    <conflict type="frameshift">
        <sequence resource="EMBL-CDS" id="AAD10838"/>
    </conflict>
</comment>
<comment type="sequence caution" evidence="24">
    <conflict type="erroneous initiation">
        <sequence resource="EMBL-CDS" id="BAA23698"/>
    </conflict>
    <text>Extended N-terminus.</text>
</comment>
<comment type="sequence caution" evidence="24">
    <conflict type="erroneous initiation">
        <sequence resource="EMBL-CDS" id="BAC04252"/>
    </conflict>
    <text>Truncated N-terminus.</text>
</comment>
<organism>
    <name type="scientific">Homo sapiens</name>
    <name type="common">Human</name>
    <dbReference type="NCBI Taxonomy" id="9606"/>
    <lineage>
        <taxon>Eukaryota</taxon>
        <taxon>Metazoa</taxon>
        <taxon>Chordata</taxon>
        <taxon>Craniata</taxon>
        <taxon>Vertebrata</taxon>
        <taxon>Euteleostomi</taxon>
        <taxon>Mammalia</taxon>
        <taxon>Eutheria</taxon>
        <taxon>Euarchontoglires</taxon>
        <taxon>Primates</taxon>
        <taxon>Haplorrhini</taxon>
        <taxon>Catarrhini</taxon>
        <taxon>Hominidae</taxon>
        <taxon>Homo</taxon>
    </lineage>
</organism>
<proteinExistence type="evidence at protein level"/>
<evidence type="ECO:0000250" key="1">
    <source>
        <dbReference type="UniProtKB" id="P48725"/>
    </source>
</evidence>
<evidence type="ECO:0000255" key="2"/>
<evidence type="ECO:0000256" key="3">
    <source>
        <dbReference type="SAM" id="MobiDB-lite"/>
    </source>
</evidence>
<evidence type="ECO:0000269" key="4">
    <source>
    </source>
</evidence>
<evidence type="ECO:0000269" key="5">
    <source>
    </source>
</evidence>
<evidence type="ECO:0000269" key="6">
    <source>
    </source>
</evidence>
<evidence type="ECO:0000269" key="7">
    <source>
    </source>
</evidence>
<evidence type="ECO:0000269" key="8">
    <source>
    </source>
</evidence>
<evidence type="ECO:0000269" key="9">
    <source>
    </source>
</evidence>
<evidence type="ECO:0000269" key="10">
    <source>
    </source>
</evidence>
<evidence type="ECO:0000269" key="11">
    <source>
    </source>
</evidence>
<evidence type="ECO:0000269" key="12">
    <source>
    </source>
</evidence>
<evidence type="ECO:0000269" key="13">
    <source>
    </source>
</evidence>
<evidence type="ECO:0000269" key="14">
    <source>
    </source>
</evidence>
<evidence type="ECO:0000269" key="15">
    <source>
    </source>
</evidence>
<evidence type="ECO:0000269" key="16">
    <source>
    </source>
</evidence>
<evidence type="ECO:0000269" key="17">
    <source>
    </source>
</evidence>
<evidence type="ECO:0000269" key="18">
    <source>
    </source>
</evidence>
<evidence type="ECO:0000269" key="19">
    <source>
    </source>
</evidence>
<evidence type="ECO:0000269" key="20">
    <source>
    </source>
</evidence>
<evidence type="ECO:0000269" key="21">
    <source>
    </source>
</evidence>
<evidence type="ECO:0000269" key="22">
    <source ref="2"/>
</evidence>
<evidence type="ECO:0000303" key="23">
    <source>
    </source>
</evidence>
<evidence type="ECO:0000305" key="24"/>
<evidence type="ECO:0007744" key="25">
    <source>
    </source>
</evidence>
<evidence type="ECO:0007744" key="26">
    <source>
    </source>
</evidence>
<evidence type="ECO:0007744" key="27">
    <source>
    </source>
</evidence>
<evidence type="ECO:0007744" key="28">
    <source>
    </source>
</evidence>
<keyword id="KW-0025">Alternative splicing</keyword>
<keyword id="KW-0112">Calmodulin-binding</keyword>
<keyword id="KW-0175">Coiled coil</keyword>
<keyword id="KW-0963">Cytoplasm</keyword>
<keyword id="KW-0206">Cytoskeleton</keyword>
<keyword id="KW-0242">Dwarfism</keyword>
<keyword id="KW-0493">Microtubule</keyword>
<keyword id="KW-0597">Phosphoprotein</keyword>
<keyword id="KW-1267">Proteomics identification</keyword>
<keyword id="KW-1185">Reference proteome</keyword>
<keyword id="KW-0832">Ubl conjugation</keyword>
<accession>O95613</accession>
<accession>O43152</accession>
<accession>Q7Z7C9</accession>
<gene>
    <name type="primary">PCNT</name>
    <name type="synonym">KIAA0402</name>
    <name type="synonym">PCNT2</name>
</gene>
<dbReference type="EMBL" id="U52962">
    <property type="protein sequence ID" value="AAD10838.1"/>
    <property type="status" value="ALT_FRAME"/>
    <property type="molecule type" value="mRNA"/>
</dbReference>
<dbReference type="EMBL" id="AF515282">
    <property type="protein sequence ID" value="AAP46636.1"/>
    <property type="molecule type" value="mRNA"/>
</dbReference>
<dbReference type="EMBL" id="AB007862">
    <property type="protein sequence ID" value="BAA23698.3"/>
    <property type="status" value="ALT_INIT"/>
    <property type="molecule type" value="mRNA"/>
</dbReference>
<dbReference type="EMBL" id="AP000471">
    <property type="status" value="NOT_ANNOTATED_CDS"/>
    <property type="molecule type" value="Genomic_DNA"/>
</dbReference>
<dbReference type="EMBL" id="AP001477">
    <property type="status" value="NOT_ANNOTATED_CDS"/>
    <property type="molecule type" value="Genomic_DNA"/>
</dbReference>
<dbReference type="EMBL" id="AP000335">
    <property type="status" value="NOT_ANNOTATED_CDS"/>
    <property type="molecule type" value="Genomic_DNA"/>
</dbReference>
<dbReference type="EMBL" id="AP000336">
    <property type="status" value="NOT_ANNOTATED_CDS"/>
    <property type="molecule type" value="Genomic_DNA"/>
</dbReference>
<dbReference type="EMBL" id="AP000337">
    <property type="status" value="NOT_ANNOTATED_CDS"/>
    <property type="molecule type" value="Genomic_DNA"/>
</dbReference>
<dbReference type="EMBL" id="AK093923">
    <property type="protein sequence ID" value="BAC04252.1"/>
    <property type="status" value="ALT_INIT"/>
    <property type="molecule type" value="mRNA"/>
</dbReference>
<dbReference type="CCDS" id="CCDS33592.1">
    <molecule id="O95613-1"/>
</dbReference>
<dbReference type="CCDS" id="CCDS93109.1">
    <molecule id="O95613-2"/>
</dbReference>
<dbReference type="RefSeq" id="NP_001302458.1">
    <molecule id="O95613-2"/>
    <property type="nucleotide sequence ID" value="NM_001315529.2"/>
</dbReference>
<dbReference type="RefSeq" id="NP_006022.3">
    <molecule id="O95613-1"/>
    <property type="nucleotide sequence ID" value="NM_006031.5"/>
</dbReference>
<dbReference type="SMR" id="O95613"/>
<dbReference type="BioGRID" id="111146">
    <property type="interactions" value="249"/>
</dbReference>
<dbReference type="CORUM" id="O95613"/>
<dbReference type="DIP" id="DIP-33829N"/>
<dbReference type="ELM" id="O95613"/>
<dbReference type="FunCoup" id="O95613">
    <property type="interactions" value="1151"/>
</dbReference>
<dbReference type="IntAct" id="O95613">
    <property type="interactions" value="144"/>
</dbReference>
<dbReference type="MINT" id="O95613"/>
<dbReference type="STRING" id="9606.ENSP00000352572"/>
<dbReference type="GlyCosmos" id="O95613">
    <property type="glycosylation" value="1 site, 1 glycan"/>
</dbReference>
<dbReference type="GlyGen" id="O95613">
    <property type="glycosylation" value="10 sites, 1 O-linked glycan (8 sites)"/>
</dbReference>
<dbReference type="iPTMnet" id="O95613"/>
<dbReference type="MetOSite" id="O95613"/>
<dbReference type="PhosphoSitePlus" id="O95613"/>
<dbReference type="SwissPalm" id="O95613"/>
<dbReference type="BioMuta" id="PCNT"/>
<dbReference type="jPOST" id="O95613"/>
<dbReference type="MassIVE" id="O95613"/>
<dbReference type="PaxDb" id="9606-ENSP00000352572"/>
<dbReference type="PeptideAtlas" id="O95613"/>
<dbReference type="ProteomicsDB" id="50949">
    <molecule id="O95613-1"/>
</dbReference>
<dbReference type="ProteomicsDB" id="50950">
    <molecule id="O95613-2"/>
</dbReference>
<dbReference type="Pumba" id="O95613"/>
<dbReference type="Antibodypedia" id="3139">
    <property type="antibodies" value="219 antibodies from 25 providers"/>
</dbReference>
<dbReference type="Ensembl" id="ENST00000359568.10">
    <molecule id="O95613-1"/>
    <property type="protein sequence ID" value="ENSP00000352572.5"/>
    <property type="gene ID" value="ENSG00000160299.19"/>
</dbReference>
<dbReference type="Ensembl" id="ENST00000480896.5">
    <molecule id="O95613-2"/>
    <property type="protein sequence ID" value="ENSP00000511989.1"/>
    <property type="gene ID" value="ENSG00000160299.19"/>
</dbReference>
<dbReference type="GeneID" id="5116"/>
<dbReference type="KEGG" id="hsa:5116"/>
<dbReference type="MANE-Select" id="ENST00000359568.10">
    <property type="protein sequence ID" value="ENSP00000352572.5"/>
    <property type="RefSeq nucleotide sequence ID" value="NM_006031.6"/>
    <property type="RefSeq protein sequence ID" value="NP_006022.3"/>
</dbReference>
<dbReference type="UCSC" id="uc002zji.4">
    <molecule id="O95613-1"/>
    <property type="organism name" value="human"/>
</dbReference>
<dbReference type="AGR" id="HGNC:16068"/>
<dbReference type="CTD" id="5116"/>
<dbReference type="DisGeNET" id="5116"/>
<dbReference type="GeneCards" id="PCNT"/>
<dbReference type="GeneReviews" id="PCNT"/>
<dbReference type="HGNC" id="HGNC:16068">
    <property type="gene designation" value="PCNT"/>
</dbReference>
<dbReference type="HPA" id="ENSG00000160299">
    <property type="expression patterns" value="Tissue enriched (skeletal)"/>
</dbReference>
<dbReference type="MalaCards" id="PCNT"/>
<dbReference type="MIM" id="210720">
    <property type="type" value="phenotype"/>
</dbReference>
<dbReference type="MIM" id="605925">
    <property type="type" value="gene"/>
</dbReference>
<dbReference type="neXtProt" id="NX_O95613"/>
<dbReference type="OpenTargets" id="ENSG00000160299"/>
<dbReference type="Orphanet" id="2637">
    <property type="disease" value="Microcephalic osteodysplastic primordial dwarfism type II"/>
</dbReference>
<dbReference type="Orphanet" id="808">
    <property type="disease" value="Seckel syndrome"/>
</dbReference>
<dbReference type="PharmGKB" id="PA33079"/>
<dbReference type="VEuPathDB" id="HostDB:ENSG00000160299"/>
<dbReference type="eggNOG" id="ENOG502QV16">
    <property type="taxonomic scope" value="Eukaryota"/>
</dbReference>
<dbReference type="GeneTree" id="ENSGT00730000110871"/>
<dbReference type="HOGENOM" id="CLU_000160_0_0_1"/>
<dbReference type="InParanoid" id="O95613"/>
<dbReference type="OMA" id="EQRGMFT"/>
<dbReference type="OrthoDB" id="2020852at2759"/>
<dbReference type="PAN-GO" id="O95613">
    <property type="GO annotations" value="0 GO annotations based on evolutionary models"/>
</dbReference>
<dbReference type="PhylomeDB" id="O95613"/>
<dbReference type="TreeFam" id="TF336114"/>
<dbReference type="PathwayCommons" id="O95613"/>
<dbReference type="Reactome" id="R-HSA-2565942">
    <property type="pathway name" value="Regulation of PLK1 Activity at G2/M Transition"/>
</dbReference>
<dbReference type="Reactome" id="R-HSA-380259">
    <property type="pathway name" value="Loss of Nlp from mitotic centrosomes"/>
</dbReference>
<dbReference type="Reactome" id="R-HSA-380270">
    <property type="pathway name" value="Recruitment of mitotic centrosome proteins and complexes"/>
</dbReference>
<dbReference type="Reactome" id="R-HSA-380284">
    <property type="pathway name" value="Loss of proteins required for interphase microtubule organization from the centrosome"/>
</dbReference>
<dbReference type="Reactome" id="R-HSA-380320">
    <property type="pathway name" value="Recruitment of NuMA to mitotic centrosomes"/>
</dbReference>
<dbReference type="Reactome" id="R-HSA-5620912">
    <property type="pathway name" value="Anchoring of the basal body to the plasma membrane"/>
</dbReference>
<dbReference type="Reactome" id="R-HSA-8854518">
    <property type="pathway name" value="AURKA Activation by TPX2"/>
</dbReference>
<dbReference type="Reactome" id="R-HSA-9613829">
    <property type="pathway name" value="Chaperone Mediated Autophagy"/>
</dbReference>
<dbReference type="Reactome" id="R-HSA-9615710">
    <property type="pathway name" value="Late endosomal microautophagy"/>
</dbReference>
<dbReference type="Reactome" id="R-HSA-9646399">
    <property type="pathway name" value="Aggrephagy"/>
</dbReference>
<dbReference type="SignaLink" id="O95613"/>
<dbReference type="SIGNOR" id="O95613"/>
<dbReference type="BioGRID-ORCS" id="5116">
    <property type="hits" value="86 hits in 1171 CRISPR screens"/>
</dbReference>
<dbReference type="CD-CODE" id="8C2F96ED">
    <property type="entry name" value="Centrosome"/>
</dbReference>
<dbReference type="ChiTaRS" id="PCNT">
    <property type="organism name" value="human"/>
</dbReference>
<dbReference type="GeneWiki" id="PCNT"/>
<dbReference type="GenomeRNAi" id="5116"/>
<dbReference type="Pharos" id="O95613">
    <property type="development level" value="Tbio"/>
</dbReference>
<dbReference type="PRO" id="PR:O95613"/>
<dbReference type="Proteomes" id="UP000005640">
    <property type="component" value="Chromosome 21"/>
</dbReference>
<dbReference type="RNAct" id="O95613">
    <property type="molecule type" value="protein"/>
</dbReference>
<dbReference type="Bgee" id="ENSG00000160299">
    <property type="expression patterns" value="Expressed in gastrocnemius and 196 other cell types or tissues"/>
</dbReference>
<dbReference type="ExpressionAtlas" id="O95613">
    <property type="expression patterns" value="baseline and differential"/>
</dbReference>
<dbReference type="GO" id="GO:0034451">
    <property type="term" value="C:centriolar satellite"/>
    <property type="evidence" value="ECO:0000314"/>
    <property type="project" value="HPA"/>
</dbReference>
<dbReference type="GO" id="GO:0005814">
    <property type="term" value="C:centriole"/>
    <property type="evidence" value="ECO:0000314"/>
    <property type="project" value="MGI"/>
</dbReference>
<dbReference type="GO" id="GO:0005813">
    <property type="term" value="C:centrosome"/>
    <property type="evidence" value="ECO:0000314"/>
    <property type="project" value="HPA"/>
</dbReference>
<dbReference type="GO" id="GO:0005829">
    <property type="term" value="C:cytosol"/>
    <property type="evidence" value="ECO:0000314"/>
    <property type="project" value="HPA"/>
</dbReference>
<dbReference type="GO" id="GO:0016020">
    <property type="term" value="C:membrane"/>
    <property type="evidence" value="ECO:0007005"/>
    <property type="project" value="UniProtKB"/>
</dbReference>
<dbReference type="GO" id="GO:0005874">
    <property type="term" value="C:microtubule"/>
    <property type="evidence" value="ECO:0007669"/>
    <property type="project" value="UniProtKB-KW"/>
</dbReference>
<dbReference type="GO" id="GO:0005516">
    <property type="term" value="F:calmodulin binding"/>
    <property type="evidence" value="ECO:0007669"/>
    <property type="project" value="UniProtKB-KW"/>
</dbReference>
<dbReference type="GO" id="GO:0060090">
    <property type="term" value="F:molecular adaptor activity"/>
    <property type="evidence" value="ECO:0007669"/>
    <property type="project" value="InterPro"/>
</dbReference>
<dbReference type="GO" id="GO:0060271">
    <property type="term" value="P:cilium assembly"/>
    <property type="evidence" value="ECO:0000314"/>
    <property type="project" value="MGI"/>
</dbReference>
<dbReference type="GO" id="GO:0000226">
    <property type="term" value="P:microtubule cytoskeleton organization"/>
    <property type="evidence" value="ECO:0000315"/>
    <property type="project" value="UniProtKB"/>
</dbReference>
<dbReference type="GO" id="GO:0007020">
    <property type="term" value="P:microtubule nucleation"/>
    <property type="evidence" value="ECO:0000318"/>
    <property type="project" value="GO_Central"/>
</dbReference>
<dbReference type="GO" id="GO:0007052">
    <property type="term" value="P:mitotic spindle organization"/>
    <property type="evidence" value="ECO:0000315"/>
    <property type="project" value="GO_Central"/>
</dbReference>
<dbReference type="GO" id="GO:0090316">
    <property type="term" value="P:positive regulation of intracellular protein transport"/>
    <property type="evidence" value="ECO:0000315"/>
    <property type="project" value="UniProtKB"/>
</dbReference>
<dbReference type="GO" id="GO:0007165">
    <property type="term" value="P:signal transduction"/>
    <property type="evidence" value="ECO:0007669"/>
    <property type="project" value="InterPro"/>
</dbReference>
<dbReference type="InterPro" id="IPR028745">
    <property type="entry name" value="AKAP9/Pericentrin"/>
</dbReference>
<dbReference type="InterPro" id="IPR019528">
    <property type="entry name" value="PACT_domain"/>
</dbReference>
<dbReference type="PANTHER" id="PTHR44981:SF3">
    <property type="entry name" value="PERICENTRIN"/>
    <property type="match status" value="1"/>
</dbReference>
<dbReference type="PANTHER" id="PTHR44981">
    <property type="entry name" value="PERICENTRIN-LIKE PROTEIN, ISOFORM F"/>
    <property type="match status" value="1"/>
</dbReference>
<dbReference type="Pfam" id="PF10495">
    <property type="entry name" value="PACT_coil_coil"/>
    <property type="match status" value="1"/>
</dbReference>
<protein>
    <recommendedName>
        <fullName>Pericentrin</fullName>
    </recommendedName>
    <alternativeName>
        <fullName>Kendrin</fullName>
    </alternativeName>
    <alternativeName>
        <fullName>Pericentrin-B</fullName>
    </alternativeName>
</protein>
<name>PCNT_HUMAN</name>